<organism>
    <name type="scientific">Bordetella avium (strain 197N)</name>
    <dbReference type="NCBI Taxonomy" id="360910"/>
    <lineage>
        <taxon>Bacteria</taxon>
        <taxon>Pseudomonadati</taxon>
        <taxon>Pseudomonadota</taxon>
        <taxon>Betaproteobacteria</taxon>
        <taxon>Burkholderiales</taxon>
        <taxon>Alcaligenaceae</taxon>
        <taxon>Bordetella</taxon>
    </lineage>
</organism>
<proteinExistence type="inferred from homology"/>
<sequence>MARSILVLHGPNLNLLGTREPEVYGSRTLAQINEDLSSLANELGVSLSAWQSNHEGALVDRIQAASKDGTDFIIINAAAYTHTSVALRDALAGVAIPFIEVHLSNLYKRESFRHHSYLSDIAVGLISGLGADGYEAALRYAVRH</sequence>
<gene>
    <name evidence="1" type="primary">aroQ</name>
    <name type="ordered locus">BAV2998</name>
</gene>
<protein>
    <recommendedName>
        <fullName evidence="1">3-dehydroquinate dehydratase</fullName>
        <shortName evidence="1">3-dehydroquinase</shortName>
        <ecNumber evidence="1">4.2.1.10</ecNumber>
    </recommendedName>
    <alternativeName>
        <fullName evidence="1">Type II DHQase</fullName>
    </alternativeName>
</protein>
<accession>Q2KUV4</accession>
<keyword id="KW-0028">Amino-acid biosynthesis</keyword>
<keyword id="KW-0057">Aromatic amino acid biosynthesis</keyword>
<keyword id="KW-0456">Lyase</keyword>
<keyword id="KW-1185">Reference proteome</keyword>
<evidence type="ECO:0000255" key="1">
    <source>
        <dbReference type="HAMAP-Rule" id="MF_00169"/>
    </source>
</evidence>
<name>AROQ_BORA1</name>
<reference key="1">
    <citation type="journal article" date="2006" name="J. Bacteriol.">
        <title>Comparison of the genome sequence of the poultry pathogen Bordetella avium with those of B. bronchiseptica, B. pertussis, and B. parapertussis reveals extensive diversity in surface structures associated with host interaction.</title>
        <authorList>
            <person name="Sebaihia M."/>
            <person name="Preston A."/>
            <person name="Maskell D.J."/>
            <person name="Kuzmiak H."/>
            <person name="Connell T.D."/>
            <person name="King N.D."/>
            <person name="Orndorff P.E."/>
            <person name="Miyamoto D.M."/>
            <person name="Thomson N.R."/>
            <person name="Harris D."/>
            <person name="Goble A."/>
            <person name="Lord A."/>
            <person name="Murphy L."/>
            <person name="Quail M.A."/>
            <person name="Rutter S."/>
            <person name="Squares R."/>
            <person name="Squares S."/>
            <person name="Woodward J."/>
            <person name="Parkhill J."/>
            <person name="Temple L.M."/>
        </authorList>
    </citation>
    <scope>NUCLEOTIDE SEQUENCE [LARGE SCALE GENOMIC DNA]</scope>
    <source>
        <strain>197N</strain>
    </source>
</reference>
<comment type="function">
    <text evidence="1">Catalyzes a trans-dehydration via an enolate intermediate.</text>
</comment>
<comment type="catalytic activity">
    <reaction evidence="1">
        <text>3-dehydroquinate = 3-dehydroshikimate + H2O</text>
        <dbReference type="Rhea" id="RHEA:21096"/>
        <dbReference type="ChEBI" id="CHEBI:15377"/>
        <dbReference type="ChEBI" id="CHEBI:16630"/>
        <dbReference type="ChEBI" id="CHEBI:32364"/>
        <dbReference type="EC" id="4.2.1.10"/>
    </reaction>
</comment>
<comment type="pathway">
    <text evidence="1">Metabolic intermediate biosynthesis; chorismate biosynthesis; chorismate from D-erythrose 4-phosphate and phosphoenolpyruvate: step 3/7.</text>
</comment>
<comment type="subunit">
    <text evidence="1">Homododecamer.</text>
</comment>
<comment type="similarity">
    <text evidence="1">Belongs to the type-II 3-dehydroquinase family.</text>
</comment>
<dbReference type="EC" id="4.2.1.10" evidence="1"/>
<dbReference type="EMBL" id="AM167904">
    <property type="protein sequence ID" value="CAJ50608.1"/>
    <property type="molecule type" value="Genomic_DNA"/>
</dbReference>
<dbReference type="RefSeq" id="WP_012418637.1">
    <property type="nucleotide sequence ID" value="NC_010645.1"/>
</dbReference>
<dbReference type="SMR" id="Q2KUV4"/>
<dbReference type="STRING" id="360910.BAV2998"/>
<dbReference type="KEGG" id="bav:BAV2998"/>
<dbReference type="eggNOG" id="COG0757">
    <property type="taxonomic scope" value="Bacteria"/>
</dbReference>
<dbReference type="HOGENOM" id="CLU_090968_1_0_4"/>
<dbReference type="OrthoDB" id="9790793at2"/>
<dbReference type="UniPathway" id="UPA00053">
    <property type="reaction ID" value="UER00086"/>
</dbReference>
<dbReference type="Proteomes" id="UP000001977">
    <property type="component" value="Chromosome"/>
</dbReference>
<dbReference type="GO" id="GO:0003855">
    <property type="term" value="F:3-dehydroquinate dehydratase activity"/>
    <property type="evidence" value="ECO:0007669"/>
    <property type="project" value="UniProtKB-UniRule"/>
</dbReference>
<dbReference type="GO" id="GO:0008652">
    <property type="term" value="P:amino acid biosynthetic process"/>
    <property type="evidence" value="ECO:0007669"/>
    <property type="project" value="UniProtKB-KW"/>
</dbReference>
<dbReference type="GO" id="GO:0009073">
    <property type="term" value="P:aromatic amino acid family biosynthetic process"/>
    <property type="evidence" value="ECO:0007669"/>
    <property type="project" value="UniProtKB-KW"/>
</dbReference>
<dbReference type="GO" id="GO:0009423">
    <property type="term" value="P:chorismate biosynthetic process"/>
    <property type="evidence" value="ECO:0007669"/>
    <property type="project" value="UniProtKB-UniRule"/>
</dbReference>
<dbReference type="GO" id="GO:0019631">
    <property type="term" value="P:quinate catabolic process"/>
    <property type="evidence" value="ECO:0007669"/>
    <property type="project" value="TreeGrafter"/>
</dbReference>
<dbReference type="CDD" id="cd00466">
    <property type="entry name" value="DHQase_II"/>
    <property type="match status" value="1"/>
</dbReference>
<dbReference type="Gene3D" id="3.40.50.9100">
    <property type="entry name" value="Dehydroquinase, class II"/>
    <property type="match status" value="1"/>
</dbReference>
<dbReference type="HAMAP" id="MF_00169">
    <property type="entry name" value="AroQ"/>
    <property type="match status" value="1"/>
</dbReference>
<dbReference type="InterPro" id="IPR001874">
    <property type="entry name" value="DHquinase_II"/>
</dbReference>
<dbReference type="InterPro" id="IPR018509">
    <property type="entry name" value="DHquinase_II_CS"/>
</dbReference>
<dbReference type="InterPro" id="IPR036441">
    <property type="entry name" value="DHquinase_II_sf"/>
</dbReference>
<dbReference type="NCBIfam" id="TIGR01088">
    <property type="entry name" value="aroQ"/>
    <property type="match status" value="1"/>
</dbReference>
<dbReference type="NCBIfam" id="NF003804">
    <property type="entry name" value="PRK05395.1-1"/>
    <property type="match status" value="1"/>
</dbReference>
<dbReference type="NCBIfam" id="NF003805">
    <property type="entry name" value="PRK05395.1-2"/>
    <property type="match status" value="1"/>
</dbReference>
<dbReference type="NCBIfam" id="NF003806">
    <property type="entry name" value="PRK05395.1-3"/>
    <property type="match status" value="1"/>
</dbReference>
<dbReference type="NCBIfam" id="NF003807">
    <property type="entry name" value="PRK05395.1-4"/>
    <property type="match status" value="1"/>
</dbReference>
<dbReference type="PANTHER" id="PTHR21272">
    <property type="entry name" value="CATABOLIC 3-DEHYDROQUINASE"/>
    <property type="match status" value="1"/>
</dbReference>
<dbReference type="PANTHER" id="PTHR21272:SF3">
    <property type="entry name" value="CATABOLIC 3-DEHYDROQUINASE"/>
    <property type="match status" value="1"/>
</dbReference>
<dbReference type="Pfam" id="PF01220">
    <property type="entry name" value="DHquinase_II"/>
    <property type="match status" value="1"/>
</dbReference>
<dbReference type="PIRSF" id="PIRSF001399">
    <property type="entry name" value="DHquinase_II"/>
    <property type="match status" value="1"/>
</dbReference>
<dbReference type="SUPFAM" id="SSF52304">
    <property type="entry name" value="Type II 3-dehydroquinate dehydratase"/>
    <property type="match status" value="1"/>
</dbReference>
<dbReference type="PROSITE" id="PS01029">
    <property type="entry name" value="DEHYDROQUINASE_II"/>
    <property type="match status" value="1"/>
</dbReference>
<feature type="chain" id="PRO_1000023453" description="3-dehydroquinate dehydratase">
    <location>
        <begin position="1"/>
        <end position="144"/>
    </location>
</feature>
<feature type="active site" description="Proton acceptor" evidence="1">
    <location>
        <position position="24"/>
    </location>
</feature>
<feature type="active site" description="Proton donor" evidence="1">
    <location>
        <position position="102"/>
    </location>
</feature>
<feature type="binding site" evidence="1">
    <location>
        <position position="76"/>
    </location>
    <ligand>
        <name>substrate</name>
    </ligand>
</feature>
<feature type="binding site" evidence="1">
    <location>
        <position position="82"/>
    </location>
    <ligand>
        <name>substrate</name>
    </ligand>
</feature>
<feature type="binding site" evidence="1">
    <location>
        <position position="89"/>
    </location>
    <ligand>
        <name>substrate</name>
    </ligand>
</feature>
<feature type="binding site" evidence="1">
    <location>
        <begin position="103"/>
        <end position="104"/>
    </location>
    <ligand>
        <name>substrate</name>
    </ligand>
</feature>
<feature type="binding site" evidence="1">
    <location>
        <position position="113"/>
    </location>
    <ligand>
        <name>substrate</name>
    </ligand>
</feature>
<feature type="site" description="Transition state stabilizer" evidence="1">
    <location>
        <position position="19"/>
    </location>
</feature>